<name>COBS_PSEP1</name>
<accession>A5W7Q2</accession>
<gene>
    <name evidence="1" type="primary">cobS</name>
    <name type="ordered locus">Pput_4038</name>
</gene>
<evidence type="ECO:0000255" key="1">
    <source>
        <dbReference type="HAMAP-Rule" id="MF_00719"/>
    </source>
</evidence>
<reference key="1">
    <citation type="submission" date="2007-05" db="EMBL/GenBank/DDBJ databases">
        <title>Complete sequence of Pseudomonas putida F1.</title>
        <authorList>
            <consortium name="US DOE Joint Genome Institute"/>
            <person name="Copeland A."/>
            <person name="Lucas S."/>
            <person name="Lapidus A."/>
            <person name="Barry K."/>
            <person name="Detter J.C."/>
            <person name="Glavina del Rio T."/>
            <person name="Hammon N."/>
            <person name="Israni S."/>
            <person name="Dalin E."/>
            <person name="Tice H."/>
            <person name="Pitluck S."/>
            <person name="Chain P."/>
            <person name="Malfatti S."/>
            <person name="Shin M."/>
            <person name="Vergez L."/>
            <person name="Schmutz J."/>
            <person name="Larimer F."/>
            <person name="Land M."/>
            <person name="Hauser L."/>
            <person name="Kyrpides N."/>
            <person name="Lykidis A."/>
            <person name="Parales R."/>
            <person name="Richardson P."/>
        </authorList>
    </citation>
    <scope>NUCLEOTIDE SEQUENCE [LARGE SCALE GENOMIC DNA]</scope>
    <source>
        <strain>ATCC 700007 / DSM 6899 / JCM 31910 / BCRC 17059 / LMG 24140 / F1</strain>
    </source>
</reference>
<keyword id="KW-0997">Cell inner membrane</keyword>
<keyword id="KW-1003">Cell membrane</keyword>
<keyword id="KW-0169">Cobalamin biosynthesis</keyword>
<keyword id="KW-0460">Magnesium</keyword>
<keyword id="KW-0472">Membrane</keyword>
<keyword id="KW-0808">Transferase</keyword>
<keyword id="KW-0812">Transmembrane</keyword>
<keyword id="KW-1133">Transmembrane helix</keyword>
<proteinExistence type="inferred from homology"/>
<sequence>MLPFWIALQFLSSLPVSLPGMPAPREVGRSLLYYPLVGLLFGLLLWLASHLLQGTPSPLHAALLLTLWVLLSGALHLDGLADSADAWLGGFGDRERTLRIMKDPRSGPIAVVTLVLVLLLKFCALWVLVGQGIGAQLLLAPLIGRAAMLGLFLGTPYVRPGGLGQALAEHLPRRAAGWVLLVCVLFCLFLGGWSVLLALAVFAWLRHLMCRRLGGTTGDTAGALLELLELAVVLGLALGL</sequence>
<protein>
    <recommendedName>
        <fullName evidence="1">Adenosylcobinamide-GDP ribazoletransferase</fullName>
        <ecNumber evidence="1">2.7.8.26</ecNumber>
    </recommendedName>
    <alternativeName>
        <fullName evidence="1">Cobalamin synthase</fullName>
    </alternativeName>
    <alternativeName>
        <fullName evidence="1">Cobalamin-5'-phosphate synthase</fullName>
    </alternativeName>
</protein>
<feature type="chain" id="PRO_1000062092" description="Adenosylcobinamide-GDP ribazoletransferase">
    <location>
        <begin position="1"/>
        <end position="240"/>
    </location>
</feature>
<feature type="transmembrane region" description="Helical" evidence="1">
    <location>
        <begin position="31"/>
        <end position="51"/>
    </location>
</feature>
<feature type="transmembrane region" description="Helical" evidence="1">
    <location>
        <begin position="62"/>
        <end position="81"/>
    </location>
</feature>
<feature type="transmembrane region" description="Helical" evidence="1">
    <location>
        <begin position="109"/>
        <end position="129"/>
    </location>
</feature>
<feature type="transmembrane region" description="Helical" evidence="1">
    <location>
        <begin position="133"/>
        <end position="153"/>
    </location>
</feature>
<feature type="transmembrane region" description="Helical" evidence="1">
    <location>
        <begin position="179"/>
        <end position="199"/>
    </location>
</feature>
<organism>
    <name type="scientific">Pseudomonas putida (strain ATCC 700007 / DSM 6899 / JCM 31910 / BCRC 17059 / LMG 24140 / F1)</name>
    <dbReference type="NCBI Taxonomy" id="351746"/>
    <lineage>
        <taxon>Bacteria</taxon>
        <taxon>Pseudomonadati</taxon>
        <taxon>Pseudomonadota</taxon>
        <taxon>Gammaproteobacteria</taxon>
        <taxon>Pseudomonadales</taxon>
        <taxon>Pseudomonadaceae</taxon>
        <taxon>Pseudomonas</taxon>
    </lineage>
</organism>
<comment type="function">
    <text evidence="1">Joins adenosylcobinamide-GDP and alpha-ribazole to generate adenosylcobalamin (Ado-cobalamin). Also synthesizes adenosylcobalamin 5'-phosphate from adenosylcobinamide-GDP and alpha-ribazole 5'-phosphate.</text>
</comment>
<comment type="catalytic activity">
    <reaction evidence="1">
        <text>alpha-ribazole + adenosylcob(III)inamide-GDP = adenosylcob(III)alamin + GMP + H(+)</text>
        <dbReference type="Rhea" id="RHEA:16049"/>
        <dbReference type="ChEBI" id="CHEBI:10329"/>
        <dbReference type="ChEBI" id="CHEBI:15378"/>
        <dbReference type="ChEBI" id="CHEBI:18408"/>
        <dbReference type="ChEBI" id="CHEBI:58115"/>
        <dbReference type="ChEBI" id="CHEBI:60487"/>
        <dbReference type="EC" id="2.7.8.26"/>
    </reaction>
</comment>
<comment type="catalytic activity">
    <reaction evidence="1">
        <text>alpha-ribazole 5'-phosphate + adenosylcob(III)inamide-GDP = adenosylcob(III)alamin 5'-phosphate + GMP + H(+)</text>
        <dbReference type="Rhea" id="RHEA:23560"/>
        <dbReference type="ChEBI" id="CHEBI:15378"/>
        <dbReference type="ChEBI" id="CHEBI:57918"/>
        <dbReference type="ChEBI" id="CHEBI:58115"/>
        <dbReference type="ChEBI" id="CHEBI:60487"/>
        <dbReference type="ChEBI" id="CHEBI:60493"/>
        <dbReference type="EC" id="2.7.8.26"/>
    </reaction>
</comment>
<comment type="cofactor">
    <cofactor evidence="1">
        <name>Mg(2+)</name>
        <dbReference type="ChEBI" id="CHEBI:18420"/>
    </cofactor>
</comment>
<comment type="pathway">
    <text evidence="1">Cofactor biosynthesis; adenosylcobalamin biosynthesis; adenosylcobalamin from cob(II)yrinate a,c-diamide: step 7/7.</text>
</comment>
<comment type="subcellular location">
    <subcellularLocation>
        <location evidence="1">Cell inner membrane</location>
        <topology evidence="1">Multi-pass membrane protein</topology>
    </subcellularLocation>
</comment>
<comment type="similarity">
    <text evidence="1">Belongs to the CobS family.</text>
</comment>
<dbReference type="EC" id="2.7.8.26" evidence="1"/>
<dbReference type="EMBL" id="CP000712">
    <property type="protein sequence ID" value="ABQ80162.1"/>
    <property type="molecule type" value="Genomic_DNA"/>
</dbReference>
<dbReference type="KEGG" id="ppf:Pput_4038"/>
<dbReference type="eggNOG" id="COG0368">
    <property type="taxonomic scope" value="Bacteria"/>
</dbReference>
<dbReference type="HOGENOM" id="CLU_057426_3_1_6"/>
<dbReference type="UniPathway" id="UPA00148">
    <property type="reaction ID" value="UER00238"/>
</dbReference>
<dbReference type="GO" id="GO:0005886">
    <property type="term" value="C:plasma membrane"/>
    <property type="evidence" value="ECO:0007669"/>
    <property type="project" value="UniProtKB-SubCell"/>
</dbReference>
<dbReference type="GO" id="GO:0051073">
    <property type="term" value="F:adenosylcobinamide-GDP ribazoletransferase activity"/>
    <property type="evidence" value="ECO:0007669"/>
    <property type="project" value="UniProtKB-UniRule"/>
</dbReference>
<dbReference type="GO" id="GO:0008818">
    <property type="term" value="F:cobalamin 5'-phosphate synthase activity"/>
    <property type="evidence" value="ECO:0007669"/>
    <property type="project" value="UniProtKB-UniRule"/>
</dbReference>
<dbReference type="GO" id="GO:0009236">
    <property type="term" value="P:cobalamin biosynthetic process"/>
    <property type="evidence" value="ECO:0007669"/>
    <property type="project" value="UniProtKB-UniRule"/>
</dbReference>
<dbReference type="HAMAP" id="MF_00719">
    <property type="entry name" value="CobS"/>
    <property type="match status" value="1"/>
</dbReference>
<dbReference type="InterPro" id="IPR003805">
    <property type="entry name" value="CobS"/>
</dbReference>
<dbReference type="NCBIfam" id="TIGR00317">
    <property type="entry name" value="cobS"/>
    <property type="match status" value="1"/>
</dbReference>
<dbReference type="NCBIfam" id="NF001278">
    <property type="entry name" value="PRK00235.1-5"/>
    <property type="match status" value="1"/>
</dbReference>
<dbReference type="PANTHER" id="PTHR34148">
    <property type="entry name" value="ADENOSYLCOBINAMIDE-GDP RIBAZOLETRANSFERASE"/>
    <property type="match status" value="1"/>
</dbReference>
<dbReference type="PANTHER" id="PTHR34148:SF1">
    <property type="entry name" value="ADENOSYLCOBINAMIDE-GDP RIBAZOLETRANSFERASE"/>
    <property type="match status" value="1"/>
</dbReference>
<dbReference type="Pfam" id="PF02654">
    <property type="entry name" value="CobS"/>
    <property type="match status" value="1"/>
</dbReference>